<protein>
    <recommendedName>
        <fullName evidence="1">ATP phosphoribosyltransferase regulatory subunit</fullName>
    </recommendedName>
</protein>
<proteinExistence type="inferred from homology"/>
<sequence>MQTWQLPEHIADVLPTNARQLESAREQLLALFRVHGYELVQPPLMEYAHSLLTHIDAGLSLKTILVTDRLSGRQLGIRADITPQVARIDAHLLSANQGINRLCYAGPVLHAQPDGLPNMREPLQAGAEMYGFADIRGDIELIDLMLKSMKIADMGKVLLSLGHIGIFRALSDAAHLDAGQSAALLALMQDKDTGSVEAQVKAWKLDGMWAKAFSLLPRLYGGREVLSDARGRLPDLSAVGGALDELQAVCDAFPDNEIHIDLSELRVDNYHTGLLYAAYAADFHDAVARGGRYDGLGGYFGRARPATGFSFDLRSFIGRLPAVERQPAVLVDAEDAEAAREAVEALREQGQCVVIDYGIGHNVSEELAGRLKKTDGVWQVVKR</sequence>
<keyword id="KW-0028">Amino-acid biosynthesis</keyword>
<keyword id="KW-0963">Cytoplasm</keyword>
<keyword id="KW-0368">Histidine biosynthesis</keyword>
<keyword id="KW-1185">Reference proteome</keyword>
<feature type="chain" id="PRO_0000242842" description="ATP phosphoribosyltransferase regulatory subunit">
    <location>
        <begin position="1"/>
        <end position="383"/>
    </location>
</feature>
<organism>
    <name type="scientific">Neisseria gonorrhoeae (strain ATCC 700825 / FA 1090)</name>
    <dbReference type="NCBI Taxonomy" id="242231"/>
    <lineage>
        <taxon>Bacteria</taxon>
        <taxon>Pseudomonadati</taxon>
        <taxon>Pseudomonadota</taxon>
        <taxon>Betaproteobacteria</taxon>
        <taxon>Neisseriales</taxon>
        <taxon>Neisseriaceae</taxon>
        <taxon>Neisseria</taxon>
    </lineage>
</organism>
<name>HISZ_NEIG1</name>
<comment type="function">
    <text evidence="1">Required for the first step of histidine biosynthesis. May allow the feedback regulation of ATP phosphoribosyltransferase activity by histidine.</text>
</comment>
<comment type="pathway">
    <text evidence="1">Amino-acid biosynthesis; L-histidine biosynthesis; L-histidine from 5-phospho-alpha-D-ribose 1-diphosphate: step 1/9.</text>
</comment>
<comment type="subunit">
    <text evidence="1">Heteromultimer composed of HisG and HisZ subunits.</text>
</comment>
<comment type="subcellular location">
    <subcellularLocation>
        <location evidence="1">Cytoplasm</location>
    </subcellularLocation>
</comment>
<comment type="miscellaneous">
    <text>This function is generally fulfilled by the C-terminal part of HisG, which is missing in some bacteria such as this one.</text>
</comment>
<comment type="similarity">
    <text evidence="1">Belongs to the class-II aminoacyl-tRNA synthetase family. HisZ subfamily.</text>
</comment>
<evidence type="ECO:0000255" key="1">
    <source>
        <dbReference type="HAMAP-Rule" id="MF_00125"/>
    </source>
</evidence>
<accession>Q5F9J6</accession>
<reference key="1">
    <citation type="submission" date="2003-03" db="EMBL/GenBank/DDBJ databases">
        <title>The complete genome sequence of Neisseria gonorrhoeae.</title>
        <authorList>
            <person name="Lewis L.A."/>
            <person name="Gillaspy A.F."/>
            <person name="McLaughlin R.E."/>
            <person name="Gipson M."/>
            <person name="Ducey T.F."/>
            <person name="Ownbey T."/>
            <person name="Hartman K."/>
            <person name="Nydick C."/>
            <person name="Carson M.B."/>
            <person name="Vaughn J."/>
            <person name="Thomson C."/>
            <person name="Song L."/>
            <person name="Lin S."/>
            <person name="Yuan X."/>
            <person name="Najar F."/>
            <person name="Zhan M."/>
            <person name="Ren Q."/>
            <person name="Zhu H."/>
            <person name="Qi S."/>
            <person name="Kenton S.M."/>
            <person name="Lai H."/>
            <person name="White J.D."/>
            <person name="Clifton S."/>
            <person name="Roe B.A."/>
            <person name="Dyer D.W."/>
        </authorList>
    </citation>
    <scope>NUCLEOTIDE SEQUENCE [LARGE SCALE GENOMIC DNA]</scope>
    <source>
        <strain>ATCC 700825 / FA 1090</strain>
    </source>
</reference>
<dbReference type="EMBL" id="AE004969">
    <property type="protein sequence ID" value="AAW89141.1"/>
    <property type="molecule type" value="Genomic_DNA"/>
</dbReference>
<dbReference type="RefSeq" id="WP_003687826.1">
    <property type="nucleotide sequence ID" value="NC_002946.2"/>
</dbReference>
<dbReference type="RefSeq" id="YP_207553.1">
    <property type="nucleotide sequence ID" value="NC_002946.2"/>
</dbReference>
<dbReference type="SMR" id="Q5F9J6"/>
<dbReference type="STRING" id="242231.NGO_0397"/>
<dbReference type="KEGG" id="ngo:NGO_0397"/>
<dbReference type="PATRIC" id="fig|242231.10.peg.478"/>
<dbReference type="HOGENOM" id="CLU_025113_0_1_4"/>
<dbReference type="UniPathway" id="UPA00031">
    <property type="reaction ID" value="UER00006"/>
</dbReference>
<dbReference type="Proteomes" id="UP000000535">
    <property type="component" value="Chromosome"/>
</dbReference>
<dbReference type="GO" id="GO:0005737">
    <property type="term" value="C:cytoplasm"/>
    <property type="evidence" value="ECO:0007669"/>
    <property type="project" value="UniProtKB-SubCell"/>
</dbReference>
<dbReference type="GO" id="GO:0004821">
    <property type="term" value="F:histidine-tRNA ligase activity"/>
    <property type="evidence" value="ECO:0007669"/>
    <property type="project" value="TreeGrafter"/>
</dbReference>
<dbReference type="GO" id="GO:0006427">
    <property type="term" value="P:histidyl-tRNA aminoacylation"/>
    <property type="evidence" value="ECO:0007669"/>
    <property type="project" value="TreeGrafter"/>
</dbReference>
<dbReference type="GO" id="GO:0000105">
    <property type="term" value="P:L-histidine biosynthetic process"/>
    <property type="evidence" value="ECO:0007669"/>
    <property type="project" value="UniProtKB-UniRule"/>
</dbReference>
<dbReference type="FunFam" id="3.30.930.10:FF:000096">
    <property type="entry name" value="ATP phosphoribosyltransferase regulatory subunit"/>
    <property type="match status" value="1"/>
</dbReference>
<dbReference type="Gene3D" id="3.30.930.10">
    <property type="entry name" value="Bira Bifunctional Protein, Domain 2"/>
    <property type="match status" value="1"/>
</dbReference>
<dbReference type="HAMAP" id="MF_00125">
    <property type="entry name" value="HisZ"/>
    <property type="match status" value="1"/>
</dbReference>
<dbReference type="InterPro" id="IPR045864">
    <property type="entry name" value="aa-tRNA-synth_II/BPL/LPL"/>
</dbReference>
<dbReference type="InterPro" id="IPR041715">
    <property type="entry name" value="HisRS-like_core"/>
</dbReference>
<dbReference type="InterPro" id="IPR004516">
    <property type="entry name" value="HisRS/HisZ"/>
</dbReference>
<dbReference type="InterPro" id="IPR004517">
    <property type="entry name" value="HisZ"/>
</dbReference>
<dbReference type="NCBIfam" id="NF008935">
    <property type="entry name" value="PRK12292.1-1"/>
    <property type="match status" value="1"/>
</dbReference>
<dbReference type="NCBIfam" id="NF009086">
    <property type="entry name" value="PRK12421.1"/>
    <property type="match status" value="1"/>
</dbReference>
<dbReference type="PANTHER" id="PTHR43707:SF1">
    <property type="entry name" value="HISTIDINE--TRNA LIGASE, MITOCHONDRIAL-RELATED"/>
    <property type="match status" value="1"/>
</dbReference>
<dbReference type="PANTHER" id="PTHR43707">
    <property type="entry name" value="HISTIDYL-TRNA SYNTHETASE"/>
    <property type="match status" value="1"/>
</dbReference>
<dbReference type="Pfam" id="PF13393">
    <property type="entry name" value="tRNA-synt_His"/>
    <property type="match status" value="1"/>
</dbReference>
<dbReference type="PIRSF" id="PIRSF001549">
    <property type="entry name" value="His-tRNA_synth"/>
    <property type="match status" value="1"/>
</dbReference>
<dbReference type="SUPFAM" id="SSF55681">
    <property type="entry name" value="Class II aaRS and biotin synthetases"/>
    <property type="match status" value="1"/>
</dbReference>
<gene>
    <name evidence="1" type="primary">hisZ</name>
    <name type="ordered locus">NGO_0397</name>
</gene>